<proteinExistence type="inferred from homology"/>
<organism>
    <name type="scientific">Mycobacterium tuberculosis (strain ATCC 25177 / H37Ra)</name>
    <dbReference type="NCBI Taxonomy" id="419947"/>
    <lineage>
        <taxon>Bacteria</taxon>
        <taxon>Bacillati</taxon>
        <taxon>Actinomycetota</taxon>
        <taxon>Actinomycetes</taxon>
        <taxon>Mycobacteriales</taxon>
        <taxon>Mycobacteriaceae</taxon>
        <taxon>Mycobacterium</taxon>
        <taxon>Mycobacterium tuberculosis complex</taxon>
    </lineage>
</organism>
<protein>
    <recommendedName>
        <fullName evidence="1">Pantothenate kinase</fullName>
        <ecNumber evidence="1">2.7.1.33</ecNumber>
    </recommendedName>
    <alternativeName>
        <fullName evidence="1">Pantothenic acid kinase</fullName>
    </alternativeName>
</protein>
<feature type="chain" id="PRO_1000043232" description="Pantothenate kinase">
    <location>
        <begin position="1"/>
        <end position="312"/>
    </location>
</feature>
<feature type="binding site" evidence="1">
    <location>
        <begin position="97"/>
        <end position="104"/>
    </location>
    <ligand>
        <name>ATP</name>
        <dbReference type="ChEBI" id="CHEBI:30616"/>
    </ligand>
</feature>
<sequence>MSRLSEPSPYVEFDRRQWRALRMSTPLALTEEELVGLRGLGEQIDLLEVEEVYLPLARLIHLQVAARQRLFAATAEFLGEPQQNPDRPVPFIIGVAGSVAVGKSTTARVLQALLARWDHHPRVDLVTTDGFLYPNAELQRRNLMHRKGFPESYNRRALMRFVTSVKSGSDYACAPVYSHLHYDIIPGAEQVVRHPDILILEGLNVLQTGPTLMVSDLFDFSLYVDARIEDIEQWYVSRFLAMRTTAFADPESHFHHYAAFSDSQAVVAAREIWRTINRPNLVENILPTRPRATLVLRKDADHSINRLRLRKL</sequence>
<comment type="catalytic activity">
    <reaction evidence="1">
        <text>(R)-pantothenate + ATP = (R)-4'-phosphopantothenate + ADP + H(+)</text>
        <dbReference type="Rhea" id="RHEA:16373"/>
        <dbReference type="ChEBI" id="CHEBI:10986"/>
        <dbReference type="ChEBI" id="CHEBI:15378"/>
        <dbReference type="ChEBI" id="CHEBI:29032"/>
        <dbReference type="ChEBI" id="CHEBI:30616"/>
        <dbReference type="ChEBI" id="CHEBI:456216"/>
        <dbReference type="EC" id="2.7.1.33"/>
    </reaction>
</comment>
<comment type="pathway">
    <text evidence="1">Cofactor biosynthesis; coenzyme A biosynthesis; CoA from (R)-pantothenate: step 1/5.</text>
</comment>
<comment type="subcellular location">
    <subcellularLocation>
        <location evidence="1">Cytoplasm</location>
    </subcellularLocation>
</comment>
<comment type="similarity">
    <text evidence="1">Belongs to the prokaryotic pantothenate kinase family.</text>
</comment>
<accession>A5U1D9</accession>
<dbReference type="EC" id="2.7.1.33" evidence="1"/>
<dbReference type="EMBL" id="CP000611">
    <property type="protein sequence ID" value="ABQ72839.1"/>
    <property type="molecule type" value="Genomic_DNA"/>
</dbReference>
<dbReference type="RefSeq" id="WP_003405790.1">
    <property type="nucleotide sequence ID" value="NZ_CP016972.1"/>
</dbReference>
<dbReference type="SMR" id="A5U1D9"/>
<dbReference type="GeneID" id="45425066"/>
<dbReference type="KEGG" id="mra:MRA_1103"/>
<dbReference type="eggNOG" id="COG0572">
    <property type="taxonomic scope" value="Bacteria"/>
</dbReference>
<dbReference type="HOGENOM" id="CLU_053818_1_1_11"/>
<dbReference type="UniPathway" id="UPA00241">
    <property type="reaction ID" value="UER00352"/>
</dbReference>
<dbReference type="Proteomes" id="UP000001988">
    <property type="component" value="Chromosome"/>
</dbReference>
<dbReference type="GO" id="GO:0005737">
    <property type="term" value="C:cytoplasm"/>
    <property type="evidence" value="ECO:0007669"/>
    <property type="project" value="UniProtKB-SubCell"/>
</dbReference>
<dbReference type="GO" id="GO:0005524">
    <property type="term" value="F:ATP binding"/>
    <property type="evidence" value="ECO:0007669"/>
    <property type="project" value="UniProtKB-UniRule"/>
</dbReference>
<dbReference type="GO" id="GO:0004594">
    <property type="term" value="F:pantothenate kinase activity"/>
    <property type="evidence" value="ECO:0007669"/>
    <property type="project" value="UniProtKB-UniRule"/>
</dbReference>
<dbReference type="GO" id="GO:0015937">
    <property type="term" value="P:coenzyme A biosynthetic process"/>
    <property type="evidence" value="ECO:0007669"/>
    <property type="project" value="UniProtKB-UniRule"/>
</dbReference>
<dbReference type="CDD" id="cd02025">
    <property type="entry name" value="PanK"/>
    <property type="match status" value="1"/>
</dbReference>
<dbReference type="FunFam" id="3.40.50.300:FF:000242">
    <property type="entry name" value="Pantothenate kinase"/>
    <property type="match status" value="1"/>
</dbReference>
<dbReference type="Gene3D" id="3.40.50.300">
    <property type="entry name" value="P-loop containing nucleotide triphosphate hydrolases"/>
    <property type="match status" value="1"/>
</dbReference>
<dbReference type="HAMAP" id="MF_00215">
    <property type="entry name" value="Pantothen_kinase_1"/>
    <property type="match status" value="1"/>
</dbReference>
<dbReference type="InterPro" id="IPR027417">
    <property type="entry name" value="P-loop_NTPase"/>
</dbReference>
<dbReference type="InterPro" id="IPR004566">
    <property type="entry name" value="PanK"/>
</dbReference>
<dbReference type="InterPro" id="IPR006083">
    <property type="entry name" value="PRK/URK"/>
</dbReference>
<dbReference type="NCBIfam" id="TIGR00554">
    <property type="entry name" value="panK_bact"/>
    <property type="match status" value="1"/>
</dbReference>
<dbReference type="PANTHER" id="PTHR10285">
    <property type="entry name" value="URIDINE KINASE"/>
    <property type="match status" value="1"/>
</dbReference>
<dbReference type="Pfam" id="PF00485">
    <property type="entry name" value="PRK"/>
    <property type="match status" value="1"/>
</dbReference>
<dbReference type="PIRSF" id="PIRSF000545">
    <property type="entry name" value="Pantothenate_kin"/>
    <property type="match status" value="1"/>
</dbReference>
<dbReference type="SUPFAM" id="SSF52540">
    <property type="entry name" value="P-loop containing nucleoside triphosphate hydrolases"/>
    <property type="match status" value="1"/>
</dbReference>
<evidence type="ECO:0000255" key="1">
    <source>
        <dbReference type="HAMAP-Rule" id="MF_00215"/>
    </source>
</evidence>
<gene>
    <name evidence="1" type="primary">coaA</name>
    <name type="ordered locus">MRA_1103</name>
</gene>
<name>COAA_MYCTA</name>
<reference key="1">
    <citation type="journal article" date="2008" name="PLoS ONE">
        <title>Genetic basis of virulence attenuation revealed by comparative genomic analysis of Mycobacterium tuberculosis strain H37Ra versus H37Rv.</title>
        <authorList>
            <person name="Zheng H."/>
            <person name="Lu L."/>
            <person name="Wang B."/>
            <person name="Pu S."/>
            <person name="Zhang X."/>
            <person name="Zhu G."/>
            <person name="Shi W."/>
            <person name="Zhang L."/>
            <person name="Wang H."/>
            <person name="Wang S."/>
            <person name="Zhao G."/>
            <person name="Zhang Y."/>
        </authorList>
    </citation>
    <scope>NUCLEOTIDE SEQUENCE [LARGE SCALE GENOMIC DNA]</scope>
    <source>
        <strain>ATCC 25177 / H37Ra</strain>
    </source>
</reference>
<keyword id="KW-0067">ATP-binding</keyword>
<keyword id="KW-0173">Coenzyme A biosynthesis</keyword>
<keyword id="KW-0963">Cytoplasm</keyword>
<keyword id="KW-0418">Kinase</keyword>
<keyword id="KW-0547">Nucleotide-binding</keyword>
<keyword id="KW-1185">Reference proteome</keyword>
<keyword id="KW-0808">Transferase</keyword>